<sequence length="574" mass="64071">MEPNSQRTKVPAFLSDLGKATLRGIRKCPRCGTFNGTRGLSCKNKTCGTIFRYGARKQPSIEAVKIITGSDLQVYSVRQRDRGPDYRCFVELGVSETAIQTVDGTIITQLSSGRCYVPSCLKAATQGIVENQCQHIKLAVTCQAEATPLTLKSSVLNALQAAPETKQSLWQLATEPTGPLVQRVTKNIMVVKCKASQKHNLGYLHASFMQKISSRSLPERRFFCSCQTLRPHKSSVPKAEAAPKCIHFFACLCAFASDETLAQEFSDFLNFDASGLKEIIVPHLGCHAESSVSACESAASKPRKRKKDEVSGAQVNSSLMPQDAVNSNLRKSGLKRPVVTSSLKRHVCGQLLDEAQVTLSFQDWLASVTERIHQTMHYQFDGKPEPLVFHIPQSFFDALQQRISIGSAKKRLPNSTTAFVRKDALPLGTFSKYTWHITNILQVKQILDTPEMPLEITRSFIQNRDGTYELFKCPKVEVENIAESYGRIEKQPVLRPLELKTFLKVGNTSPDQKEPTPFIIEWIPDILPQSKIGELRIKFEYGHHRNGHVADYQDPRPPMDQPLELAPLTTITFP</sequence>
<evidence type="ECO:0000256" key="1">
    <source>
        <dbReference type="SAM" id="MobiDB-lite"/>
    </source>
</evidence>
<evidence type="ECO:0000303" key="2">
    <source>
    </source>
</evidence>
<evidence type="ECO:0000303" key="3">
    <source>
    </source>
</evidence>
<evidence type="ECO:0000305" key="4"/>
<dbReference type="EMBL" id="AK047127">
    <property type="protein sequence ID" value="BAC32967.1"/>
    <property type="molecule type" value="mRNA"/>
</dbReference>
<dbReference type="EMBL" id="AK077503">
    <property type="protein sequence ID" value="BAC36833.1"/>
    <property type="molecule type" value="mRNA"/>
</dbReference>
<dbReference type="EMBL" id="AK170524">
    <property type="protein sequence ID" value="BAE41857.1"/>
    <property type="molecule type" value="mRNA"/>
</dbReference>
<dbReference type="EMBL" id="AK171511">
    <property type="protein sequence ID" value="BAE42498.1"/>
    <property type="molecule type" value="mRNA"/>
</dbReference>
<dbReference type="EMBL" id="BC025632">
    <property type="protein sequence ID" value="AAH25632.1"/>
    <property type="molecule type" value="mRNA"/>
</dbReference>
<dbReference type="EMBL" id="BC026926">
    <property type="protein sequence ID" value="AAH26926.1"/>
    <property type="molecule type" value="mRNA"/>
</dbReference>
<dbReference type="EMBL" id="BC031913">
    <property type="protein sequence ID" value="AAH31913.1"/>
    <property type="molecule type" value="mRNA"/>
</dbReference>
<dbReference type="CCDS" id="CCDS20313.1">
    <molecule id="Q8R3C1-1"/>
</dbReference>
<dbReference type="CCDS" id="CCDS57435.1">
    <molecule id="Q8R3C1-2"/>
</dbReference>
<dbReference type="RefSeq" id="NP_001230670.1">
    <molecule id="Q8R3C1-2"/>
    <property type="nucleotide sequence ID" value="NM_001243741.1"/>
</dbReference>
<dbReference type="RefSeq" id="NP_001230671.1">
    <molecule id="Q8R3C1-1"/>
    <property type="nucleotide sequence ID" value="NM_001243742.1"/>
</dbReference>
<dbReference type="RefSeq" id="NP_001351484.1">
    <molecule id="Q8R3C1-1"/>
    <property type="nucleotide sequence ID" value="NM_001364555.1"/>
</dbReference>
<dbReference type="RefSeq" id="NP_001351485.1">
    <molecule id="Q8R3C1-1"/>
    <property type="nucleotide sequence ID" value="NM_001364556.1"/>
</dbReference>
<dbReference type="RefSeq" id="NP_001351486.1">
    <molecule id="Q8R3C1-1"/>
    <property type="nucleotide sequence ID" value="NM_001364557.1"/>
</dbReference>
<dbReference type="RefSeq" id="NP_001351487.1">
    <molecule id="Q8R3C1-2"/>
    <property type="nucleotide sequence ID" value="NM_001364558.1"/>
</dbReference>
<dbReference type="RefSeq" id="NP_666282.3">
    <molecule id="Q8R3C1-1"/>
    <property type="nucleotide sequence ID" value="NM_146170.4"/>
</dbReference>
<dbReference type="RefSeq" id="XP_006506036.1">
    <molecule id="Q8R3C1-1"/>
    <property type="nucleotide sequence ID" value="XM_006505973.5"/>
</dbReference>
<dbReference type="RefSeq" id="XP_006506038.1">
    <molecule id="Q8R3C1-1"/>
    <property type="nucleotide sequence ID" value="XM_006505975.5"/>
</dbReference>
<dbReference type="RefSeq" id="XP_006506039.1">
    <property type="nucleotide sequence ID" value="XM_006505976.3"/>
</dbReference>
<dbReference type="RefSeq" id="XP_006506040.1">
    <property type="nucleotide sequence ID" value="XM_006505977.3"/>
</dbReference>
<dbReference type="RefSeq" id="XP_017177018.1">
    <property type="nucleotide sequence ID" value="XM_017321529.1"/>
</dbReference>
<dbReference type="RefSeq" id="XP_030111199.1">
    <molecule id="Q8R3C1-2"/>
    <property type="nucleotide sequence ID" value="XM_030255339.2"/>
</dbReference>
<dbReference type="RefSeq" id="XP_036021941.1">
    <molecule id="Q8R3C1-1"/>
    <property type="nucleotide sequence ID" value="XM_036166048.1"/>
</dbReference>
<dbReference type="FunCoup" id="Q8R3C1">
    <property type="interactions" value="3965"/>
</dbReference>
<dbReference type="STRING" id="10090.ENSMUSP00000057461"/>
<dbReference type="iPTMnet" id="Q8R3C1"/>
<dbReference type="PhosphoSitePlus" id="Q8R3C1"/>
<dbReference type="PaxDb" id="10090-ENSMUSP00000057461"/>
<dbReference type="PeptideAtlas" id="Q8R3C1"/>
<dbReference type="Antibodypedia" id="31065">
    <property type="antibodies" value="88 antibodies from 15 providers"/>
</dbReference>
<dbReference type="Ensembl" id="ENSMUST00000050497.14">
    <molecule id="Q8R3C1-1"/>
    <property type="protein sequence ID" value="ENSMUSP00000057461.8"/>
    <property type="gene ID" value="ENSMUSG00000046679.17"/>
</dbReference>
<dbReference type="Ensembl" id="ENSMUST00000113698.8">
    <molecule id="Q8R3C1-2"/>
    <property type="protein sequence ID" value="ENSMUSP00000109328.2"/>
    <property type="gene ID" value="ENSMUSG00000046679.17"/>
</dbReference>
<dbReference type="Ensembl" id="ENSMUST00000113700.8">
    <molecule id="Q8R3C1-1"/>
    <property type="protein sequence ID" value="ENSMUSP00000109330.2"/>
    <property type="gene ID" value="ENSMUSG00000046679.17"/>
</dbReference>
<dbReference type="Ensembl" id="ENSMUST00000133753.8">
    <molecule id="Q8R3C1-4"/>
    <property type="protein sequence ID" value="ENSMUSP00000121520.2"/>
    <property type="gene ID" value="ENSMUSG00000046679.17"/>
</dbReference>
<dbReference type="Ensembl" id="ENSMUST00000141972.8">
    <molecule id="Q8R3C1-4"/>
    <property type="protein sequence ID" value="ENSMUSP00000115916.2"/>
    <property type="gene ID" value="ENSMUSG00000046679.17"/>
</dbReference>
<dbReference type="GeneID" id="232196"/>
<dbReference type="KEGG" id="mmu:232196"/>
<dbReference type="UCSC" id="uc009cru.2">
    <molecule id="Q8R3C1-1"/>
    <property type="organism name" value="mouse"/>
</dbReference>
<dbReference type="UCSC" id="uc009crx.2">
    <molecule id="Q8R3C1-2"/>
    <property type="organism name" value="mouse"/>
</dbReference>
<dbReference type="AGR" id="MGI:2141787"/>
<dbReference type="CTD" id="232196"/>
<dbReference type="MGI" id="MGI:2141787">
    <property type="gene designation" value="C87436"/>
</dbReference>
<dbReference type="VEuPathDB" id="HostDB:ENSMUSG00000046679"/>
<dbReference type="eggNOG" id="ENOG502R3NH">
    <property type="taxonomic scope" value="Eukaryota"/>
</dbReference>
<dbReference type="GeneTree" id="ENSGT00390000011031"/>
<dbReference type="HOGENOM" id="CLU_022155_0_0_1"/>
<dbReference type="InParanoid" id="Q8R3C1"/>
<dbReference type="OMA" id="FWMPSQL"/>
<dbReference type="OrthoDB" id="6506929at2759"/>
<dbReference type="PhylomeDB" id="Q8R3C1"/>
<dbReference type="TreeFam" id="TF323774"/>
<dbReference type="BioGRID-ORCS" id="232196">
    <property type="hits" value="1 hit in 78 CRISPR screens"/>
</dbReference>
<dbReference type="PRO" id="PR:Q8R3C1"/>
<dbReference type="Proteomes" id="UP000000589">
    <property type="component" value="Chromosome 6"/>
</dbReference>
<dbReference type="RNAct" id="Q8R3C1">
    <property type="molecule type" value="protein"/>
</dbReference>
<dbReference type="Bgee" id="ENSMUSG00000046679">
    <property type="expression patterns" value="Expressed in spermatid and 238 other cell types or tissues"/>
</dbReference>
<dbReference type="ExpressionAtlas" id="Q8R3C1">
    <property type="expression patterns" value="baseline and differential"/>
</dbReference>
<dbReference type="GO" id="GO:0005654">
    <property type="term" value="C:nucleoplasm"/>
    <property type="evidence" value="ECO:0007669"/>
    <property type="project" value="Ensembl"/>
</dbReference>
<dbReference type="InterPro" id="IPR026049">
    <property type="entry name" value="C2orf42"/>
</dbReference>
<dbReference type="InterPro" id="IPR029269">
    <property type="entry name" value="Zf-tcix"/>
</dbReference>
<dbReference type="PANTHER" id="PTHR13518:SF1">
    <property type="entry name" value="C2ORF42 HOMOLOG"/>
    <property type="match status" value="1"/>
</dbReference>
<dbReference type="PANTHER" id="PTHR13518">
    <property type="entry name" value="PUTATIVE TREBLE-CLEF ZINC-FINGER C2ORF42 FAMILY MEMBER"/>
    <property type="match status" value="1"/>
</dbReference>
<dbReference type="Pfam" id="PF14952">
    <property type="entry name" value="zf-tcix"/>
    <property type="match status" value="1"/>
</dbReference>
<proteinExistence type="evidence at transcript level"/>
<protein>
    <recommendedName>
        <fullName>Uncharacterized protein C2orf42 homolog</fullName>
    </recommendedName>
</protein>
<comment type="alternative products">
    <event type="alternative splicing"/>
    <isoform>
        <id>Q8R3C1-1</id>
        <name>1</name>
        <sequence type="displayed"/>
    </isoform>
    <isoform>
        <id>Q8R3C1-2</id>
        <name>2</name>
        <sequence type="described" ref="VSP_027793"/>
    </isoform>
    <isoform>
        <id>Q8R3C1-3</id>
        <name>3</name>
        <sequence type="described" ref="VSP_027792"/>
    </isoform>
    <isoform>
        <id>Q8R3C1-4</id>
        <name>4</name>
        <sequence type="described" ref="VSP_027794 VSP_027795"/>
    </isoform>
</comment>
<organism>
    <name type="scientific">Mus musculus</name>
    <name type="common">Mouse</name>
    <dbReference type="NCBI Taxonomy" id="10090"/>
    <lineage>
        <taxon>Eukaryota</taxon>
        <taxon>Metazoa</taxon>
        <taxon>Chordata</taxon>
        <taxon>Craniata</taxon>
        <taxon>Vertebrata</taxon>
        <taxon>Euteleostomi</taxon>
        <taxon>Mammalia</taxon>
        <taxon>Eutheria</taxon>
        <taxon>Euarchontoglires</taxon>
        <taxon>Glires</taxon>
        <taxon>Rodentia</taxon>
        <taxon>Myomorpha</taxon>
        <taxon>Muroidea</taxon>
        <taxon>Muridae</taxon>
        <taxon>Murinae</taxon>
        <taxon>Mus</taxon>
        <taxon>Mus</taxon>
    </lineage>
</organism>
<feature type="chain" id="PRO_0000300123" description="Uncharacterized protein C2orf42 homolog">
    <location>
        <begin position="1"/>
        <end position="574"/>
    </location>
</feature>
<feature type="region of interest" description="Disordered" evidence="1">
    <location>
        <begin position="297"/>
        <end position="317"/>
    </location>
</feature>
<feature type="splice variant" id="VSP_027792" description="In isoform 3." evidence="3">
    <location>
        <begin position="1"/>
        <end position="188"/>
    </location>
</feature>
<feature type="splice variant" id="VSP_027793" description="In isoform 2." evidence="3">
    <location>
        <begin position="276"/>
        <end position="285"/>
    </location>
</feature>
<feature type="splice variant" id="VSP_027794" description="In isoform 4." evidence="2">
    <original>KPEPL</original>
    <variation>PTKWS</variation>
    <location>
        <begin position="383"/>
        <end position="387"/>
    </location>
</feature>
<feature type="splice variant" id="VSP_027795" description="In isoform 4." evidence="2">
    <location>
        <begin position="388"/>
        <end position="574"/>
    </location>
</feature>
<feature type="sequence conflict" description="In Ref. 1; BAC36833." evidence="4" ref="1">
    <original>K</original>
    <variation>Q</variation>
    <location>
        <position position="475"/>
    </location>
</feature>
<feature type="sequence conflict" description="In Ref. 1; BAC36833." evidence="4" ref="1">
    <original>E</original>
    <variation>G</variation>
    <location>
        <position position="498"/>
    </location>
</feature>
<feature type="sequence conflict" description="In Ref. 1; BAC32967/BAC36833." evidence="4" ref="1">
    <original>L</original>
    <variation>I</variation>
    <location>
        <position position="527"/>
    </location>
</feature>
<feature type="sequence conflict" description="In Ref. 1; BAE42498/BAE41857." evidence="4" ref="1">
    <original>T</original>
    <variation>P</variation>
    <location>
        <position position="572"/>
    </location>
</feature>
<reference key="1">
    <citation type="journal article" date="2005" name="Science">
        <title>The transcriptional landscape of the mammalian genome.</title>
        <authorList>
            <person name="Carninci P."/>
            <person name="Kasukawa T."/>
            <person name="Katayama S."/>
            <person name="Gough J."/>
            <person name="Frith M.C."/>
            <person name="Maeda N."/>
            <person name="Oyama R."/>
            <person name="Ravasi T."/>
            <person name="Lenhard B."/>
            <person name="Wells C."/>
            <person name="Kodzius R."/>
            <person name="Shimokawa K."/>
            <person name="Bajic V.B."/>
            <person name="Brenner S.E."/>
            <person name="Batalov S."/>
            <person name="Forrest A.R."/>
            <person name="Zavolan M."/>
            <person name="Davis M.J."/>
            <person name="Wilming L.G."/>
            <person name="Aidinis V."/>
            <person name="Allen J.E."/>
            <person name="Ambesi-Impiombato A."/>
            <person name="Apweiler R."/>
            <person name="Aturaliya R.N."/>
            <person name="Bailey T.L."/>
            <person name="Bansal M."/>
            <person name="Baxter L."/>
            <person name="Beisel K.W."/>
            <person name="Bersano T."/>
            <person name="Bono H."/>
            <person name="Chalk A.M."/>
            <person name="Chiu K.P."/>
            <person name="Choudhary V."/>
            <person name="Christoffels A."/>
            <person name="Clutterbuck D.R."/>
            <person name="Crowe M.L."/>
            <person name="Dalla E."/>
            <person name="Dalrymple B.P."/>
            <person name="de Bono B."/>
            <person name="Della Gatta G."/>
            <person name="di Bernardo D."/>
            <person name="Down T."/>
            <person name="Engstrom P."/>
            <person name="Fagiolini M."/>
            <person name="Faulkner G."/>
            <person name="Fletcher C.F."/>
            <person name="Fukushima T."/>
            <person name="Furuno M."/>
            <person name="Futaki S."/>
            <person name="Gariboldi M."/>
            <person name="Georgii-Hemming P."/>
            <person name="Gingeras T.R."/>
            <person name="Gojobori T."/>
            <person name="Green R.E."/>
            <person name="Gustincich S."/>
            <person name="Harbers M."/>
            <person name="Hayashi Y."/>
            <person name="Hensch T.K."/>
            <person name="Hirokawa N."/>
            <person name="Hill D."/>
            <person name="Huminiecki L."/>
            <person name="Iacono M."/>
            <person name="Ikeo K."/>
            <person name="Iwama A."/>
            <person name="Ishikawa T."/>
            <person name="Jakt M."/>
            <person name="Kanapin A."/>
            <person name="Katoh M."/>
            <person name="Kawasawa Y."/>
            <person name="Kelso J."/>
            <person name="Kitamura H."/>
            <person name="Kitano H."/>
            <person name="Kollias G."/>
            <person name="Krishnan S.P."/>
            <person name="Kruger A."/>
            <person name="Kummerfeld S.K."/>
            <person name="Kurochkin I.V."/>
            <person name="Lareau L.F."/>
            <person name="Lazarevic D."/>
            <person name="Lipovich L."/>
            <person name="Liu J."/>
            <person name="Liuni S."/>
            <person name="McWilliam S."/>
            <person name="Madan Babu M."/>
            <person name="Madera M."/>
            <person name="Marchionni L."/>
            <person name="Matsuda H."/>
            <person name="Matsuzawa S."/>
            <person name="Miki H."/>
            <person name="Mignone F."/>
            <person name="Miyake S."/>
            <person name="Morris K."/>
            <person name="Mottagui-Tabar S."/>
            <person name="Mulder N."/>
            <person name="Nakano N."/>
            <person name="Nakauchi H."/>
            <person name="Ng P."/>
            <person name="Nilsson R."/>
            <person name="Nishiguchi S."/>
            <person name="Nishikawa S."/>
            <person name="Nori F."/>
            <person name="Ohara O."/>
            <person name="Okazaki Y."/>
            <person name="Orlando V."/>
            <person name="Pang K.C."/>
            <person name="Pavan W.J."/>
            <person name="Pavesi G."/>
            <person name="Pesole G."/>
            <person name="Petrovsky N."/>
            <person name="Piazza S."/>
            <person name="Reed J."/>
            <person name="Reid J.F."/>
            <person name="Ring B.Z."/>
            <person name="Ringwald M."/>
            <person name="Rost B."/>
            <person name="Ruan Y."/>
            <person name="Salzberg S.L."/>
            <person name="Sandelin A."/>
            <person name="Schneider C."/>
            <person name="Schoenbach C."/>
            <person name="Sekiguchi K."/>
            <person name="Semple C.A."/>
            <person name="Seno S."/>
            <person name="Sessa L."/>
            <person name="Sheng Y."/>
            <person name="Shibata Y."/>
            <person name="Shimada H."/>
            <person name="Shimada K."/>
            <person name="Silva D."/>
            <person name="Sinclair B."/>
            <person name="Sperling S."/>
            <person name="Stupka E."/>
            <person name="Sugiura K."/>
            <person name="Sultana R."/>
            <person name="Takenaka Y."/>
            <person name="Taki K."/>
            <person name="Tammoja K."/>
            <person name="Tan S.L."/>
            <person name="Tang S."/>
            <person name="Taylor M.S."/>
            <person name="Tegner J."/>
            <person name="Teichmann S.A."/>
            <person name="Ueda H.R."/>
            <person name="van Nimwegen E."/>
            <person name="Verardo R."/>
            <person name="Wei C.L."/>
            <person name="Yagi K."/>
            <person name="Yamanishi H."/>
            <person name="Zabarovsky E."/>
            <person name="Zhu S."/>
            <person name="Zimmer A."/>
            <person name="Hide W."/>
            <person name="Bult C."/>
            <person name="Grimmond S.M."/>
            <person name="Teasdale R.D."/>
            <person name="Liu E.T."/>
            <person name="Brusic V."/>
            <person name="Quackenbush J."/>
            <person name="Wahlestedt C."/>
            <person name="Mattick J.S."/>
            <person name="Hume D.A."/>
            <person name="Kai C."/>
            <person name="Sasaki D."/>
            <person name="Tomaru Y."/>
            <person name="Fukuda S."/>
            <person name="Kanamori-Katayama M."/>
            <person name="Suzuki M."/>
            <person name="Aoki J."/>
            <person name="Arakawa T."/>
            <person name="Iida J."/>
            <person name="Imamura K."/>
            <person name="Itoh M."/>
            <person name="Kato T."/>
            <person name="Kawaji H."/>
            <person name="Kawagashira N."/>
            <person name="Kawashima T."/>
            <person name="Kojima M."/>
            <person name="Kondo S."/>
            <person name="Konno H."/>
            <person name="Nakano K."/>
            <person name="Ninomiya N."/>
            <person name="Nishio T."/>
            <person name="Okada M."/>
            <person name="Plessy C."/>
            <person name="Shibata K."/>
            <person name="Shiraki T."/>
            <person name="Suzuki S."/>
            <person name="Tagami M."/>
            <person name="Waki K."/>
            <person name="Watahiki A."/>
            <person name="Okamura-Oho Y."/>
            <person name="Suzuki H."/>
            <person name="Kawai J."/>
            <person name="Hayashizaki Y."/>
        </authorList>
    </citation>
    <scope>NUCLEOTIDE SEQUENCE [LARGE SCALE MRNA] (ISOFORMS 1; 2 AND 3)</scope>
    <source>
        <strain>C57BL/6J</strain>
        <strain>NOD</strain>
        <tissue>Cerebellum</tissue>
        <tissue>Dendritic cell</tissue>
    </source>
</reference>
<reference key="2">
    <citation type="journal article" date="2004" name="Genome Res.">
        <title>The status, quality, and expansion of the NIH full-length cDNA project: the Mammalian Gene Collection (MGC).</title>
        <authorList>
            <consortium name="The MGC Project Team"/>
        </authorList>
    </citation>
    <scope>NUCLEOTIDE SEQUENCE [LARGE SCALE MRNA] (ISOFORMS 1 AND 4)</scope>
    <source>
        <strain>FVB/N</strain>
        <strain>FVB/N-3</strain>
        <tissue>Mammary tumor</tissue>
    </source>
</reference>
<keyword id="KW-0025">Alternative splicing</keyword>
<keyword id="KW-1185">Reference proteome</keyword>
<accession>Q8R3C1</accession>
<accession>Q3TB16</accession>
<accession>Q8BK22</accession>
<accession>Q8BXH4</accession>
<accession>Q8R2Z4</accession>
<name>CB042_MOUSE</name>